<proteinExistence type="inferred from homology"/>
<name>GPPA_VIBC3</name>
<sequence>MSQAVSSPLYAAIDLGSNSFHMLVVRHIDGSVQTMAKIKRKVRLAAGLDEHNALSLDAMQRGWDCLSLFAERLQDIPAENIRIVGTATLRTATNAGEFIAKANQILGHPIDVISGEEEAATIYKGVAHTSGGLGRRLVVDIGGASTELIIGEGFEAKALTSLKMGCVTWLERHFKDRQLTATNFNNAILAAKQMLDPILTQYTELGWNVCVGASGTVQALQEIMLAQGMDEVITLTKLKRLQKQAMLADHLEELDIEGLTLERALVFPSGLSILIAIFESLNIEAMTLAGGALREGLVYEMVQDLRQEDIRARTIRCVQTRYQIDSAYGDQVATLASKLLAQCGGEAWINEPQAEMLLRTAAKLHEIGLTIDFKKGGEHSAYLLQHLDLPGYTRAQKHYLGEIVRRYREQLTSLPEQYALSGTSGKRVLRLLRLAVLLSHRRSPALEPMVELSAQEDKLTLTLDGEWLAKNPLTRTELELEANRQTDIGWPLSIECH</sequence>
<reference key="1">
    <citation type="submission" date="2007-03" db="EMBL/GenBank/DDBJ databases">
        <authorList>
            <person name="Heidelberg J."/>
        </authorList>
    </citation>
    <scope>NUCLEOTIDE SEQUENCE [LARGE SCALE GENOMIC DNA]</scope>
    <source>
        <strain>ATCC 39541 / Classical Ogawa 395 / O395</strain>
    </source>
</reference>
<reference key="2">
    <citation type="journal article" date="2008" name="PLoS ONE">
        <title>A recalibrated molecular clock and independent origins for the cholera pandemic clones.</title>
        <authorList>
            <person name="Feng L."/>
            <person name="Reeves P.R."/>
            <person name="Lan R."/>
            <person name="Ren Y."/>
            <person name="Gao C."/>
            <person name="Zhou Z."/>
            <person name="Ren Y."/>
            <person name="Cheng J."/>
            <person name="Wang W."/>
            <person name="Wang J."/>
            <person name="Qian W."/>
            <person name="Li D."/>
            <person name="Wang L."/>
        </authorList>
    </citation>
    <scope>NUCLEOTIDE SEQUENCE [LARGE SCALE GENOMIC DNA]</scope>
    <source>
        <strain>ATCC 39541 / Classical Ogawa 395 / O395</strain>
    </source>
</reference>
<feature type="chain" id="PRO_1000073559" description="Guanosine-5'-triphosphate,3'-diphosphate pyrophosphatase">
    <location>
        <begin position="1"/>
        <end position="497"/>
    </location>
</feature>
<keyword id="KW-0378">Hydrolase</keyword>
<comment type="function">
    <text evidence="1">Catalyzes the conversion of pppGpp to ppGpp. Guanosine pentaphosphate (pppGpp) is a cytoplasmic signaling molecule which together with ppGpp controls the 'stringent response', an adaptive process that allows bacteria to respond to amino acid starvation, resulting in the coordinated regulation of numerous cellular activities.</text>
</comment>
<comment type="catalytic activity">
    <reaction evidence="1">
        <text>guanosine 3'-diphosphate 5'-triphosphate + H2O = guanosine 3',5'-bis(diphosphate) + phosphate + H(+)</text>
        <dbReference type="Rhea" id="RHEA:13073"/>
        <dbReference type="ChEBI" id="CHEBI:15377"/>
        <dbReference type="ChEBI" id="CHEBI:15378"/>
        <dbReference type="ChEBI" id="CHEBI:43474"/>
        <dbReference type="ChEBI" id="CHEBI:77828"/>
        <dbReference type="ChEBI" id="CHEBI:142410"/>
        <dbReference type="EC" id="3.6.1.40"/>
    </reaction>
</comment>
<comment type="pathway">
    <text evidence="1">Purine metabolism; ppGpp biosynthesis; ppGpp from GTP: step 2/2.</text>
</comment>
<comment type="similarity">
    <text evidence="1">Belongs to the GppA/Ppx family. GppA subfamily.</text>
</comment>
<gene>
    <name evidence="1" type="primary">gppA</name>
    <name type="ordered locus">VC0395_A2696</name>
    <name type="ordered locus">VC395_0348</name>
</gene>
<protein>
    <recommendedName>
        <fullName evidence="1">Guanosine-5'-triphosphate,3'-diphosphate pyrophosphatase</fullName>
        <ecNumber evidence="1">3.6.1.40</ecNumber>
    </recommendedName>
    <alternativeName>
        <fullName evidence="1">Guanosine pentaphosphate phosphohydrolase</fullName>
    </alternativeName>
    <alternativeName>
        <fullName evidence="1">pppGpp-5'-phosphohydrolase</fullName>
    </alternativeName>
</protein>
<dbReference type="EC" id="3.6.1.40" evidence="1"/>
<dbReference type="EMBL" id="CP000627">
    <property type="protein sequence ID" value="ABQ19640.1"/>
    <property type="molecule type" value="Genomic_DNA"/>
</dbReference>
<dbReference type="EMBL" id="CP001235">
    <property type="protein sequence ID" value="ACP08373.1"/>
    <property type="molecule type" value="Genomic_DNA"/>
</dbReference>
<dbReference type="RefSeq" id="WP_000076046.1">
    <property type="nucleotide sequence ID" value="NZ_JAACZH010000020.1"/>
</dbReference>
<dbReference type="SMR" id="A5F3R3"/>
<dbReference type="KEGG" id="vco:VC0395_A2696"/>
<dbReference type="KEGG" id="vcr:VC395_0348"/>
<dbReference type="PATRIC" id="fig|345073.21.peg.335"/>
<dbReference type="eggNOG" id="COG0248">
    <property type="taxonomic scope" value="Bacteria"/>
</dbReference>
<dbReference type="HOGENOM" id="CLU_025908_4_0_6"/>
<dbReference type="OrthoDB" id="9793035at2"/>
<dbReference type="UniPathway" id="UPA00908">
    <property type="reaction ID" value="UER00885"/>
</dbReference>
<dbReference type="Proteomes" id="UP000000249">
    <property type="component" value="Chromosome 2"/>
</dbReference>
<dbReference type="GO" id="GO:0008894">
    <property type="term" value="F:guanosine-5'-triphosphate,3'-diphosphate diphosphatase activity"/>
    <property type="evidence" value="ECO:0007669"/>
    <property type="project" value="UniProtKB-UniRule"/>
</dbReference>
<dbReference type="GO" id="GO:0015974">
    <property type="term" value="P:guanosine pentaphosphate catabolic process"/>
    <property type="evidence" value="ECO:0007669"/>
    <property type="project" value="InterPro"/>
</dbReference>
<dbReference type="GO" id="GO:0015970">
    <property type="term" value="P:guanosine tetraphosphate biosynthetic process"/>
    <property type="evidence" value="ECO:0007669"/>
    <property type="project" value="UniProtKB-UniRule"/>
</dbReference>
<dbReference type="GO" id="GO:0015949">
    <property type="term" value="P:nucleobase-containing small molecule interconversion"/>
    <property type="evidence" value="ECO:0007669"/>
    <property type="project" value="TreeGrafter"/>
</dbReference>
<dbReference type="CDD" id="cd24117">
    <property type="entry name" value="ASKHA_NBD_EcGppA-like"/>
    <property type="match status" value="1"/>
</dbReference>
<dbReference type="FunFam" id="3.30.420.150:FF:000001">
    <property type="entry name" value="Guanosine-5'-triphosphate,3'-diphosphate pyrophosphatase"/>
    <property type="match status" value="1"/>
</dbReference>
<dbReference type="FunFam" id="3.30.420.40:FF:000023">
    <property type="entry name" value="Guanosine-5'-triphosphate,3'-diphosphate pyrophosphatase"/>
    <property type="match status" value="1"/>
</dbReference>
<dbReference type="Gene3D" id="3.30.420.40">
    <property type="match status" value="1"/>
</dbReference>
<dbReference type="Gene3D" id="3.30.420.150">
    <property type="entry name" value="Exopolyphosphatase. Domain 2"/>
    <property type="match status" value="1"/>
</dbReference>
<dbReference type="Gene3D" id="1.10.3210.10">
    <property type="entry name" value="Hypothetical protein af1432"/>
    <property type="match status" value="1"/>
</dbReference>
<dbReference type="HAMAP" id="MF_01550">
    <property type="entry name" value="GppA"/>
    <property type="match status" value="1"/>
</dbReference>
<dbReference type="InterPro" id="IPR043129">
    <property type="entry name" value="ATPase_NBD"/>
</dbReference>
<dbReference type="InterPro" id="IPR050273">
    <property type="entry name" value="GppA/Ppx_hydrolase"/>
</dbReference>
<dbReference type="InterPro" id="IPR023709">
    <property type="entry name" value="Guo-5TP_3DP_PyrP"/>
</dbReference>
<dbReference type="InterPro" id="IPR048950">
    <property type="entry name" value="Ppx_GppA_C"/>
</dbReference>
<dbReference type="InterPro" id="IPR003695">
    <property type="entry name" value="Ppx_GppA_N"/>
</dbReference>
<dbReference type="InterPro" id="IPR030673">
    <property type="entry name" value="PyroPPase_GppA_Ppx"/>
</dbReference>
<dbReference type="NCBIfam" id="NF008260">
    <property type="entry name" value="PRK11031.1"/>
    <property type="match status" value="1"/>
</dbReference>
<dbReference type="PANTHER" id="PTHR30005">
    <property type="entry name" value="EXOPOLYPHOSPHATASE"/>
    <property type="match status" value="1"/>
</dbReference>
<dbReference type="PANTHER" id="PTHR30005:SF0">
    <property type="entry name" value="RETROGRADE REGULATION PROTEIN 2"/>
    <property type="match status" value="1"/>
</dbReference>
<dbReference type="Pfam" id="PF02541">
    <property type="entry name" value="Ppx-GppA"/>
    <property type="match status" value="1"/>
</dbReference>
<dbReference type="Pfam" id="PF21447">
    <property type="entry name" value="Ppx-GppA_III"/>
    <property type="match status" value="1"/>
</dbReference>
<dbReference type="PIRSF" id="PIRSF001267">
    <property type="entry name" value="Pyrophosphatase_GppA_Ppx"/>
    <property type="match status" value="1"/>
</dbReference>
<dbReference type="SUPFAM" id="SSF53067">
    <property type="entry name" value="Actin-like ATPase domain"/>
    <property type="match status" value="2"/>
</dbReference>
<dbReference type="SUPFAM" id="SSF109604">
    <property type="entry name" value="HD-domain/PDEase-like"/>
    <property type="match status" value="1"/>
</dbReference>
<organism>
    <name type="scientific">Vibrio cholerae serotype O1 (strain ATCC 39541 / Classical Ogawa 395 / O395)</name>
    <dbReference type="NCBI Taxonomy" id="345073"/>
    <lineage>
        <taxon>Bacteria</taxon>
        <taxon>Pseudomonadati</taxon>
        <taxon>Pseudomonadota</taxon>
        <taxon>Gammaproteobacteria</taxon>
        <taxon>Vibrionales</taxon>
        <taxon>Vibrionaceae</taxon>
        <taxon>Vibrio</taxon>
    </lineage>
</organism>
<accession>A5F3R3</accession>
<accession>C3M3W5</accession>
<evidence type="ECO:0000255" key="1">
    <source>
        <dbReference type="HAMAP-Rule" id="MF_01550"/>
    </source>
</evidence>